<protein>
    <recommendedName>
        <fullName evidence="1">Large ribosomal subunit protein uL30</fullName>
    </recommendedName>
    <alternativeName>
        <fullName evidence="2">50S ribosomal protein L30</fullName>
    </alternativeName>
</protein>
<dbReference type="EMBL" id="CP000247">
    <property type="protein sequence ID" value="ABG71370.1"/>
    <property type="molecule type" value="Genomic_DNA"/>
</dbReference>
<dbReference type="RefSeq" id="WP_001140433.1">
    <property type="nucleotide sequence ID" value="NC_008253.1"/>
</dbReference>
<dbReference type="SMR" id="Q0TCF9"/>
<dbReference type="GeneID" id="93778685"/>
<dbReference type="KEGG" id="ecp:ECP_3390"/>
<dbReference type="HOGENOM" id="CLU_131047_1_4_6"/>
<dbReference type="Proteomes" id="UP000009182">
    <property type="component" value="Chromosome"/>
</dbReference>
<dbReference type="GO" id="GO:0022625">
    <property type="term" value="C:cytosolic large ribosomal subunit"/>
    <property type="evidence" value="ECO:0007669"/>
    <property type="project" value="TreeGrafter"/>
</dbReference>
<dbReference type="GO" id="GO:0003735">
    <property type="term" value="F:structural constituent of ribosome"/>
    <property type="evidence" value="ECO:0007669"/>
    <property type="project" value="InterPro"/>
</dbReference>
<dbReference type="GO" id="GO:0006412">
    <property type="term" value="P:translation"/>
    <property type="evidence" value="ECO:0007669"/>
    <property type="project" value="UniProtKB-UniRule"/>
</dbReference>
<dbReference type="CDD" id="cd01658">
    <property type="entry name" value="Ribosomal_L30"/>
    <property type="match status" value="1"/>
</dbReference>
<dbReference type="FunFam" id="3.30.1390.20:FF:000001">
    <property type="entry name" value="50S ribosomal protein L30"/>
    <property type="match status" value="1"/>
</dbReference>
<dbReference type="Gene3D" id="3.30.1390.20">
    <property type="entry name" value="Ribosomal protein L30, ferredoxin-like fold domain"/>
    <property type="match status" value="1"/>
</dbReference>
<dbReference type="HAMAP" id="MF_01371_B">
    <property type="entry name" value="Ribosomal_uL30_B"/>
    <property type="match status" value="1"/>
</dbReference>
<dbReference type="InterPro" id="IPR036919">
    <property type="entry name" value="Ribo_uL30_ferredoxin-like_sf"/>
</dbReference>
<dbReference type="InterPro" id="IPR005996">
    <property type="entry name" value="Ribosomal_uL30_bac-type"/>
</dbReference>
<dbReference type="InterPro" id="IPR018038">
    <property type="entry name" value="Ribosomal_uL30_CS"/>
</dbReference>
<dbReference type="InterPro" id="IPR016082">
    <property type="entry name" value="Ribosomal_uL30_ferredoxin-like"/>
</dbReference>
<dbReference type="NCBIfam" id="TIGR01308">
    <property type="entry name" value="rpmD_bact"/>
    <property type="match status" value="1"/>
</dbReference>
<dbReference type="PANTHER" id="PTHR15892:SF2">
    <property type="entry name" value="LARGE RIBOSOMAL SUBUNIT PROTEIN UL30M"/>
    <property type="match status" value="1"/>
</dbReference>
<dbReference type="PANTHER" id="PTHR15892">
    <property type="entry name" value="MITOCHONDRIAL RIBOSOMAL PROTEIN L30"/>
    <property type="match status" value="1"/>
</dbReference>
<dbReference type="Pfam" id="PF00327">
    <property type="entry name" value="Ribosomal_L30"/>
    <property type="match status" value="1"/>
</dbReference>
<dbReference type="PIRSF" id="PIRSF002211">
    <property type="entry name" value="Ribosomal_L30_bac-type"/>
    <property type="match status" value="1"/>
</dbReference>
<dbReference type="SUPFAM" id="SSF55129">
    <property type="entry name" value="Ribosomal protein L30p/L7e"/>
    <property type="match status" value="1"/>
</dbReference>
<dbReference type="PROSITE" id="PS00634">
    <property type="entry name" value="RIBOSOMAL_L30"/>
    <property type="match status" value="1"/>
</dbReference>
<keyword id="KW-0687">Ribonucleoprotein</keyword>
<keyword id="KW-0689">Ribosomal protein</keyword>
<sequence length="59" mass="6542">MAKTIKITQTRSAIGRLPKHKATLLGLGLRRIGHTVEREDTPAIRGMINAVSFMVKVEE</sequence>
<evidence type="ECO:0000255" key="1">
    <source>
        <dbReference type="HAMAP-Rule" id="MF_01371"/>
    </source>
</evidence>
<evidence type="ECO:0000305" key="2"/>
<accession>Q0TCF9</accession>
<reference key="1">
    <citation type="journal article" date="2006" name="Mol. Microbiol.">
        <title>Role of pathogenicity island-associated integrases in the genome plasticity of uropathogenic Escherichia coli strain 536.</title>
        <authorList>
            <person name="Hochhut B."/>
            <person name="Wilde C."/>
            <person name="Balling G."/>
            <person name="Middendorf B."/>
            <person name="Dobrindt U."/>
            <person name="Brzuszkiewicz E."/>
            <person name="Gottschalk G."/>
            <person name="Carniel E."/>
            <person name="Hacker J."/>
        </authorList>
    </citation>
    <scope>NUCLEOTIDE SEQUENCE [LARGE SCALE GENOMIC DNA]</scope>
    <source>
        <strain>536 / UPEC</strain>
    </source>
</reference>
<comment type="subunit">
    <text evidence="1">Part of the 50S ribosomal subunit.</text>
</comment>
<comment type="similarity">
    <text evidence="1">Belongs to the universal ribosomal protein uL30 family.</text>
</comment>
<proteinExistence type="inferred from homology"/>
<feature type="chain" id="PRO_0000273785" description="Large ribosomal subunit protein uL30">
    <location>
        <begin position="1"/>
        <end position="59"/>
    </location>
</feature>
<gene>
    <name evidence="1" type="primary">rpmD</name>
    <name type="ordered locus">ECP_3390</name>
</gene>
<organism>
    <name type="scientific">Escherichia coli O6:K15:H31 (strain 536 / UPEC)</name>
    <dbReference type="NCBI Taxonomy" id="362663"/>
    <lineage>
        <taxon>Bacteria</taxon>
        <taxon>Pseudomonadati</taxon>
        <taxon>Pseudomonadota</taxon>
        <taxon>Gammaproteobacteria</taxon>
        <taxon>Enterobacterales</taxon>
        <taxon>Enterobacteriaceae</taxon>
        <taxon>Escherichia</taxon>
    </lineage>
</organism>
<name>RL30_ECOL5</name>